<protein>
    <recommendedName>
        <fullName evidence="1">Regulator of ribonuclease activity A</fullName>
    </recommendedName>
</protein>
<comment type="function">
    <text evidence="1">Globally modulates RNA abundance by binding to RNase E (Rne) and regulating its endonucleolytic activity. Can modulate Rne action in a substrate-dependent manner by altering the composition of the degradosome. Modulates RNA-binding and helicase activities of the degradosome.</text>
</comment>
<comment type="subunit">
    <text evidence="1">Homotrimer. Binds to both RNA-binding sites in the C-terminal region of Rne and to RhlB.</text>
</comment>
<comment type="subcellular location">
    <subcellularLocation>
        <location evidence="1">Cytoplasm</location>
    </subcellularLocation>
</comment>
<comment type="similarity">
    <text evidence="1">Belongs to the RraA family.</text>
</comment>
<feature type="chain" id="PRO_1000060382" description="Regulator of ribonuclease activity A">
    <location>
        <begin position="1"/>
        <end position="161"/>
    </location>
</feature>
<sequence length="161" mass="17400">MKYDTSELCDIYQEDVNVVEPLFSNFGGRSSFGGQIITVKCFEDNGLLYELLEQNGRGRILLVDGGGSVRRALIDADLARLALQNEWEGIVVYGAVRQVDDLEELDLGIQAIAAIPVGAAGEGIGESDVRVNFGGVTFFSGDHLYADNTGIILSEDPLDIE</sequence>
<dbReference type="EMBL" id="CP000653">
    <property type="protein sequence ID" value="ABP62699.1"/>
    <property type="molecule type" value="Genomic_DNA"/>
</dbReference>
<dbReference type="RefSeq" id="WP_015961003.1">
    <property type="nucleotide sequence ID" value="NC_009436.1"/>
</dbReference>
<dbReference type="SMR" id="A4WG69"/>
<dbReference type="STRING" id="399742.Ent638_4044"/>
<dbReference type="GeneID" id="93307036"/>
<dbReference type="KEGG" id="ent:Ent638_4044"/>
<dbReference type="eggNOG" id="COG0684">
    <property type="taxonomic scope" value="Bacteria"/>
</dbReference>
<dbReference type="HOGENOM" id="CLU_072626_4_0_6"/>
<dbReference type="OrthoDB" id="943692at2"/>
<dbReference type="Proteomes" id="UP000000230">
    <property type="component" value="Chromosome"/>
</dbReference>
<dbReference type="GO" id="GO:0005829">
    <property type="term" value="C:cytosol"/>
    <property type="evidence" value="ECO:0007669"/>
    <property type="project" value="TreeGrafter"/>
</dbReference>
<dbReference type="GO" id="GO:0060698">
    <property type="term" value="F:endoribonuclease inhibitor activity"/>
    <property type="evidence" value="ECO:0007669"/>
    <property type="project" value="UniProtKB-UniRule"/>
</dbReference>
<dbReference type="GO" id="GO:0019899">
    <property type="term" value="F:enzyme binding"/>
    <property type="evidence" value="ECO:0007669"/>
    <property type="project" value="UniProtKB-UniRule"/>
</dbReference>
<dbReference type="GO" id="GO:1902369">
    <property type="term" value="P:negative regulation of RNA catabolic process"/>
    <property type="evidence" value="ECO:0007669"/>
    <property type="project" value="TreeGrafter"/>
</dbReference>
<dbReference type="CDD" id="cd16841">
    <property type="entry name" value="RraA_family"/>
    <property type="match status" value="1"/>
</dbReference>
<dbReference type="FunFam" id="3.50.30.40:FF:000001">
    <property type="entry name" value="Regulator of ribonuclease activity A"/>
    <property type="match status" value="1"/>
</dbReference>
<dbReference type="Gene3D" id="3.50.30.40">
    <property type="entry name" value="Ribonuclease E inhibitor RraA/RraA-like"/>
    <property type="match status" value="1"/>
</dbReference>
<dbReference type="HAMAP" id="MF_00471">
    <property type="entry name" value="RraA"/>
    <property type="match status" value="1"/>
</dbReference>
<dbReference type="InterPro" id="IPR010203">
    <property type="entry name" value="RraA"/>
</dbReference>
<dbReference type="InterPro" id="IPR005493">
    <property type="entry name" value="RraA/RraA-like"/>
</dbReference>
<dbReference type="InterPro" id="IPR036704">
    <property type="entry name" value="RraA/RraA-like_sf"/>
</dbReference>
<dbReference type="InterPro" id="IPR014339">
    <property type="entry name" value="RraA_gpbac"/>
</dbReference>
<dbReference type="NCBIfam" id="TIGR01935">
    <property type="entry name" value="NOT-MenG"/>
    <property type="match status" value="1"/>
</dbReference>
<dbReference type="NCBIfam" id="NF006875">
    <property type="entry name" value="PRK09372.1"/>
    <property type="match status" value="1"/>
</dbReference>
<dbReference type="NCBIfam" id="TIGR02998">
    <property type="entry name" value="RraA_entero"/>
    <property type="match status" value="1"/>
</dbReference>
<dbReference type="PANTHER" id="PTHR33254">
    <property type="entry name" value="4-HYDROXY-4-METHYL-2-OXOGLUTARATE ALDOLASE 3-RELATED"/>
    <property type="match status" value="1"/>
</dbReference>
<dbReference type="PANTHER" id="PTHR33254:SF29">
    <property type="entry name" value="REGULATOR OF RIBONUCLEASE ACTIVITY A"/>
    <property type="match status" value="1"/>
</dbReference>
<dbReference type="Pfam" id="PF03737">
    <property type="entry name" value="RraA-like"/>
    <property type="match status" value="1"/>
</dbReference>
<dbReference type="SUPFAM" id="SSF89562">
    <property type="entry name" value="RraA-like"/>
    <property type="match status" value="1"/>
</dbReference>
<proteinExistence type="inferred from homology"/>
<accession>A4WG69</accession>
<keyword id="KW-0963">Cytoplasm</keyword>
<gene>
    <name evidence="1" type="primary">rraA</name>
    <name type="ordered locus">Ent638_4044</name>
</gene>
<name>RRAA_ENT38</name>
<organism>
    <name type="scientific">Enterobacter sp. (strain 638)</name>
    <dbReference type="NCBI Taxonomy" id="399742"/>
    <lineage>
        <taxon>Bacteria</taxon>
        <taxon>Pseudomonadati</taxon>
        <taxon>Pseudomonadota</taxon>
        <taxon>Gammaproteobacteria</taxon>
        <taxon>Enterobacterales</taxon>
        <taxon>Enterobacteriaceae</taxon>
        <taxon>Enterobacter</taxon>
    </lineage>
</organism>
<evidence type="ECO:0000255" key="1">
    <source>
        <dbReference type="HAMAP-Rule" id="MF_00471"/>
    </source>
</evidence>
<reference key="1">
    <citation type="journal article" date="2010" name="PLoS Genet.">
        <title>Genome sequence of the plant growth promoting endophytic bacterium Enterobacter sp. 638.</title>
        <authorList>
            <person name="Taghavi S."/>
            <person name="van der Lelie D."/>
            <person name="Hoffman A."/>
            <person name="Zhang Y.B."/>
            <person name="Walla M.D."/>
            <person name="Vangronsveld J."/>
            <person name="Newman L."/>
            <person name="Monchy S."/>
        </authorList>
    </citation>
    <scope>NUCLEOTIDE SEQUENCE [LARGE SCALE GENOMIC DNA]</scope>
    <source>
        <strain>638</strain>
    </source>
</reference>